<evidence type="ECO:0000255" key="1">
    <source>
        <dbReference type="HAMAP-Rule" id="MF_01454"/>
    </source>
</evidence>
<evidence type="ECO:0000255" key="2">
    <source>
        <dbReference type="PROSITE-ProRule" id="PRU01231"/>
    </source>
</evidence>
<keyword id="KW-0963">Cytoplasm</keyword>
<keyword id="KW-0342">GTP-binding</keyword>
<keyword id="KW-0378">Hydrolase</keyword>
<keyword id="KW-0460">Magnesium</keyword>
<keyword id="KW-0479">Metal-binding</keyword>
<keyword id="KW-0547">Nucleotide-binding</keyword>
<proteinExistence type="inferred from homology"/>
<reference key="1">
    <citation type="journal article" date="2004" name="PLoS Biol.">
        <title>Phylogenomics of the reproductive parasite Wolbachia pipientis wMel: a streamlined genome overrun by mobile genetic elements.</title>
        <authorList>
            <person name="Wu M."/>
            <person name="Sun L.V."/>
            <person name="Vamathevan J.J."/>
            <person name="Riegler M."/>
            <person name="DeBoy R.T."/>
            <person name="Brownlie J.C."/>
            <person name="McGraw E.A."/>
            <person name="Martin W."/>
            <person name="Esser C."/>
            <person name="Ahmadinejad N."/>
            <person name="Wiegand C."/>
            <person name="Madupu R."/>
            <person name="Beanan M.J."/>
            <person name="Brinkac L.M."/>
            <person name="Daugherty S.C."/>
            <person name="Durkin A.S."/>
            <person name="Kolonay J.F."/>
            <person name="Nelson W.C."/>
            <person name="Mohamoud Y."/>
            <person name="Lee P."/>
            <person name="Berry K.J."/>
            <person name="Young M.B."/>
            <person name="Utterback T.R."/>
            <person name="Weidman J.F."/>
            <person name="Nierman W.C."/>
            <person name="Paulsen I.T."/>
            <person name="Nelson K.E."/>
            <person name="Tettelin H."/>
            <person name="O'Neill S.L."/>
            <person name="Eisen J.A."/>
        </authorList>
    </citation>
    <scope>NUCLEOTIDE SEQUENCE [LARGE SCALE GENOMIC DNA]</scope>
</reference>
<comment type="function">
    <text evidence="1">An essential GTPase which binds GTP, GDP and possibly (p)ppGpp with moderate affinity, with high nucleotide exchange rates and a fairly low GTP hydrolysis rate. Plays a role in control of the cell cycle, stress response, ribosome biogenesis and in those bacteria that undergo differentiation, in morphogenesis control.</text>
</comment>
<comment type="cofactor">
    <cofactor evidence="1">
        <name>Mg(2+)</name>
        <dbReference type="ChEBI" id="CHEBI:18420"/>
    </cofactor>
</comment>
<comment type="subunit">
    <text evidence="1">Monomer.</text>
</comment>
<comment type="subcellular location">
    <subcellularLocation>
        <location evidence="1">Cytoplasm</location>
    </subcellularLocation>
</comment>
<comment type="similarity">
    <text evidence="1">Belongs to the TRAFAC class OBG-HflX-like GTPase superfamily. OBG GTPase family.</text>
</comment>
<sequence length="340" mass="37230">MGFIDEVKLCLKAGDGGDGCASFRREKFVEFGGPNGGNGGKGGNIVFISDANLNTLLHFRYRRHIKADSGKNGAGRDRSGTAGKDVILKVPVGAQIIDEESEEIIVDLDKPGMEFQVAQGGKGGLGNTNFKSSTNKAPRHFTYGQPGEEKHVLLKLKVLSDVGIIGMPNAGKSKFLTRCSNSDTKVGDYPFTTVRPHLGMVKVDDSEVVIADIPGIITDAHLGVGLGHKFLKHIERCQILLHLIDVTHDDVVLAYSCIHNELELYNSDLVEKEEIVVLNKCDLLREAEILEKKNHLANYLNKEVLCLSINGDLQPILRLLSEKLKKSNSKEIDVYDPFKA</sequence>
<protein>
    <recommendedName>
        <fullName evidence="1">GTPase Obg</fullName>
        <ecNumber evidence="1">3.6.5.-</ecNumber>
    </recommendedName>
    <alternativeName>
        <fullName evidence="1">GTP-binding protein Obg</fullName>
    </alternativeName>
</protein>
<organism>
    <name type="scientific">Wolbachia pipientis wMel</name>
    <dbReference type="NCBI Taxonomy" id="163164"/>
    <lineage>
        <taxon>Bacteria</taxon>
        <taxon>Pseudomonadati</taxon>
        <taxon>Pseudomonadota</taxon>
        <taxon>Alphaproteobacteria</taxon>
        <taxon>Rickettsiales</taxon>
        <taxon>Anaplasmataceae</taxon>
        <taxon>Wolbachieae</taxon>
        <taxon>Wolbachia</taxon>
    </lineage>
</organism>
<accession>Q73HQ3</accession>
<name>OBG_WOLPM</name>
<gene>
    <name evidence="1" type="primary">obg</name>
    <name type="ordered locus">WD_0493</name>
</gene>
<dbReference type="EC" id="3.6.5.-" evidence="1"/>
<dbReference type="EMBL" id="AE017196">
    <property type="protein sequence ID" value="AAS14210.1"/>
    <property type="molecule type" value="Genomic_DNA"/>
</dbReference>
<dbReference type="SMR" id="Q73HQ3"/>
<dbReference type="EnsemblBacteria" id="AAS14210">
    <property type="protein sequence ID" value="AAS14210"/>
    <property type="gene ID" value="WD_0493"/>
</dbReference>
<dbReference type="KEGG" id="wol:WD_0493"/>
<dbReference type="eggNOG" id="COG0536">
    <property type="taxonomic scope" value="Bacteria"/>
</dbReference>
<dbReference type="Proteomes" id="UP000008215">
    <property type="component" value="Chromosome"/>
</dbReference>
<dbReference type="GO" id="GO:0005737">
    <property type="term" value="C:cytoplasm"/>
    <property type="evidence" value="ECO:0007669"/>
    <property type="project" value="UniProtKB-SubCell"/>
</dbReference>
<dbReference type="GO" id="GO:0005525">
    <property type="term" value="F:GTP binding"/>
    <property type="evidence" value="ECO:0007669"/>
    <property type="project" value="UniProtKB-UniRule"/>
</dbReference>
<dbReference type="GO" id="GO:0003924">
    <property type="term" value="F:GTPase activity"/>
    <property type="evidence" value="ECO:0007669"/>
    <property type="project" value="UniProtKB-UniRule"/>
</dbReference>
<dbReference type="GO" id="GO:0000287">
    <property type="term" value="F:magnesium ion binding"/>
    <property type="evidence" value="ECO:0007669"/>
    <property type="project" value="InterPro"/>
</dbReference>
<dbReference type="GO" id="GO:0042254">
    <property type="term" value="P:ribosome biogenesis"/>
    <property type="evidence" value="ECO:0007669"/>
    <property type="project" value="UniProtKB-UniRule"/>
</dbReference>
<dbReference type="CDD" id="cd01898">
    <property type="entry name" value="Obg"/>
    <property type="match status" value="1"/>
</dbReference>
<dbReference type="FunFam" id="2.70.210.12:FF:000001">
    <property type="entry name" value="GTPase Obg"/>
    <property type="match status" value="1"/>
</dbReference>
<dbReference type="Gene3D" id="2.70.210.12">
    <property type="entry name" value="GTP1/OBG domain"/>
    <property type="match status" value="1"/>
</dbReference>
<dbReference type="Gene3D" id="3.40.50.300">
    <property type="entry name" value="P-loop containing nucleotide triphosphate hydrolases"/>
    <property type="match status" value="1"/>
</dbReference>
<dbReference type="HAMAP" id="MF_01454">
    <property type="entry name" value="GTPase_Obg"/>
    <property type="match status" value="1"/>
</dbReference>
<dbReference type="InterPro" id="IPR031167">
    <property type="entry name" value="G_OBG"/>
</dbReference>
<dbReference type="InterPro" id="IPR006073">
    <property type="entry name" value="GTP-bd"/>
</dbReference>
<dbReference type="InterPro" id="IPR014100">
    <property type="entry name" value="GTP-bd_Obg/CgtA"/>
</dbReference>
<dbReference type="InterPro" id="IPR006169">
    <property type="entry name" value="GTP1_OBG_dom"/>
</dbReference>
<dbReference type="InterPro" id="IPR036726">
    <property type="entry name" value="GTP1_OBG_dom_sf"/>
</dbReference>
<dbReference type="InterPro" id="IPR045086">
    <property type="entry name" value="OBG_GTPase"/>
</dbReference>
<dbReference type="InterPro" id="IPR027417">
    <property type="entry name" value="P-loop_NTPase"/>
</dbReference>
<dbReference type="NCBIfam" id="TIGR02729">
    <property type="entry name" value="Obg_CgtA"/>
    <property type="match status" value="1"/>
</dbReference>
<dbReference type="NCBIfam" id="NF008955">
    <property type="entry name" value="PRK12297.1"/>
    <property type="match status" value="1"/>
</dbReference>
<dbReference type="NCBIfam" id="NF008956">
    <property type="entry name" value="PRK12299.1"/>
    <property type="match status" value="1"/>
</dbReference>
<dbReference type="PANTHER" id="PTHR11702">
    <property type="entry name" value="DEVELOPMENTALLY REGULATED GTP-BINDING PROTEIN-RELATED"/>
    <property type="match status" value="1"/>
</dbReference>
<dbReference type="PANTHER" id="PTHR11702:SF31">
    <property type="entry name" value="MITOCHONDRIAL RIBOSOME-ASSOCIATED GTPASE 2"/>
    <property type="match status" value="1"/>
</dbReference>
<dbReference type="Pfam" id="PF01018">
    <property type="entry name" value="GTP1_OBG"/>
    <property type="match status" value="1"/>
</dbReference>
<dbReference type="Pfam" id="PF01926">
    <property type="entry name" value="MMR_HSR1"/>
    <property type="match status" value="1"/>
</dbReference>
<dbReference type="PIRSF" id="PIRSF002401">
    <property type="entry name" value="GTP_bd_Obg/CgtA"/>
    <property type="match status" value="1"/>
</dbReference>
<dbReference type="PRINTS" id="PR00326">
    <property type="entry name" value="GTP1OBG"/>
</dbReference>
<dbReference type="SUPFAM" id="SSF82051">
    <property type="entry name" value="Obg GTP-binding protein N-terminal domain"/>
    <property type="match status" value="1"/>
</dbReference>
<dbReference type="SUPFAM" id="SSF52540">
    <property type="entry name" value="P-loop containing nucleoside triphosphate hydrolases"/>
    <property type="match status" value="1"/>
</dbReference>
<dbReference type="PROSITE" id="PS51710">
    <property type="entry name" value="G_OBG"/>
    <property type="match status" value="1"/>
</dbReference>
<dbReference type="PROSITE" id="PS51883">
    <property type="entry name" value="OBG"/>
    <property type="match status" value="1"/>
</dbReference>
<feature type="chain" id="PRO_0000386388" description="GTPase Obg">
    <location>
        <begin position="1"/>
        <end position="340"/>
    </location>
</feature>
<feature type="domain" description="Obg" evidence="2">
    <location>
        <begin position="1"/>
        <end position="159"/>
    </location>
</feature>
<feature type="domain" description="OBG-type G" evidence="1">
    <location>
        <begin position="160"/>
        <end position="329"/>
    </location>
</feature>
<feature type="binding site" evidence="1">
    <location>
        <begin position="166"/>
        <end position="173"/>
    </location>
    <ligand>
        <name>GTP</name>
        <dbReference type="ChEBI" id="CHEBI:37565"/>
    </ligand>
</feature>
<feature type="binding site" evidence="1">
    <location>
        <position position="173"/>
    </location>
    <ligand>
        <name>Mg(2+)</name>
        <dbReference type="ChEBI" id="CHEBI:18420"/>
    </ligand>
</feature>
<feature type="binding site" evidence="1">
    <location>
        <begin position="191"/>
        <end position="195"/>
    </location>
    <ligand>
        <name>GTP</name>
        <dbReference type="ChEBI" id="CHEBI:37565"/>
    </ligand>
</feature>
<feature type="binding site" evidence="1">
    <location>
        <position position="193"/>
    </location>
    <ligand>
        <name>Mg(2+)</name>
        <dbReference type="ChEBI" id="CHEBI:18420"/>
    </ligand>
</feature>
<feature type="binding site" evidence="1">
    <location>
        <begin position="212"/>
        <end position="215"/>
    </location>
    <ligand>
        <name>GTP</name>
        <dbReference type="ChEBI" id="CHEBI:37565"/>
    </ligand>
</feature>
<feature type="binding site" evidence="1">
    <location>
        <begin position="279"/>
        <end position="282"/>
    </location>
    <ligand>
        <name>GTP</name>
        <dbReference type="ChEBI" id="CHEBI:37565"/>
    </ligand>
</feature>
<feature type="binding site" evidence="1">
    <location>
        <begin position="310"/>
        <end position="312"/>
    </location>
    <ligand>
        <name>GTP</name>
        <dbReference type="ChEBI" id="CHEBI:37565"/>
    </ligand>
</feature>